<comment type="function">
    <text evidence="1">Catalyzes the reversible isomerization of glucose-6-phosphate to fructose-6-phosphate.</text>
</comment>
<comment type="catalytic activity">
    <reaction evidence="1">
        <text>alpha-D-glucose 6-phosphate = beta-D-fructose 6-phosphate</text>
        <dbReference type="Rhea" id="RHEA:11816"/>
        <dbReference type="ChEBI" id="CHEBI:57634"/>
        <dbReference type="ChEBI" id="CHEBI:58225"/>
        <dbReference type="EC" id="5.3.1.9"/>
    </reaction>
</comment>
<comment type="pathway">
    <text evidence="1">Carbohydrate biosynthesis; gluconeogenesis.</text>
</comment>
<comment type="pathway">
    <text evidence="1">Carbohydrate degradation; glycolysis; D-glyceraldehyde 3-phosphate and glycerone phosphate from D-glucose: step 2/4.</text>
</comment>
<comment type="subcellular location">
    <subcellularLocation>
        <location evidence="1">Cytoplasm</location>
    </subcellularLocation>
</comment>
<comment type="similarity">
    <text evidence="1">Belongs to the GPI family.</text>
</comment>
<protein>
    <recommendedName>
        <fullName evidence="1">Glucose-6-phosphate isomerase</fullName>
        <shortName evidence="1">GPI</shortName>
        <ecNumber evidence="1">5.3.1.9</ecNumber>
    </recommendedName>
    <alternativeName>
        <fullName evidence="1">Phosphoglucose isomerase</fullName>
        <shortName evidence="1">PGI</shortName>
    </alternativeName>
    <alternativeName>
        <fullName evidence="1">Phosphohexose isomerase</fullName>
        <shortName evidence="1">PHI</shortName>
    </alternativeName>
</protein>
<evidence type="ECO:0000255" key="1">
    <source>
        <dbReference type="HAMAP-Rule" id="MF_00473"/>
    </source>
</evidence>
<reference key="1">
    <citation type="journal article" date="2009" name="PLoS Genet.">
        <title>Organised genome dynamics in the Escherichia coli species results in highly diverse adaptive paths.</title>
        <authorList>
            <person name="Touchon M."/>
            <person name="Hoede C."/>
            <person name="Tenaillon O."/>
            <person name="Barbe V."/>
            <person name="Baeriswyl S."/>
            <person name="Bidet P."/>
            <person name="Bingen E."/>
            <person name="Bonacorsi S."/>
            <person name="Bouchier C."/>
            <person name="Bouvet O."/>
            <person name="Calteau A."/>
            <person name="Chiapello H."/>
            <person name="Clermont O."/>
            <person name="Cruveiller S."/>
            <person name="Danchin A."/>
            <person name="Diard M."/>
            <person name="Dossat C."/>
            <person name="Karoui M.E."/>
            <person name="Frapy E."/>
            <person name="Garry L."/>
            <person name="Ghigo J.M."/>
            <person name="Gilles A.M."/>
            <person name="Johnson J."/>
            <person name="Le Bouguenec C."/>
            <person name="Lescat M."/>
            <person name="Mangenot S."/>
            <person name="Martinez-Jehanne V."/>
            <person name="Matic I."/>
            <person name="Nassif X."/>
            <person name="Oztas S."/>
            <person name="Petit M.A."/>
            <person name="Pichon C."/>
            <person name="Rouy Z."/>
            <person name="Ruf C.S."/>
            <person name="Schneider D."/>
            <person name="Tourret J."/>
            <person name="Vacherie B."/>
            <person name="Vallenet D."/>
            <person name="Medigue C."/>
            <person name="Rocha E.P.C."/>
            <person name="Denamur E."/>
        </authorList>
    </citation>
    <scope>NUCLEOTIDE SEQUENCE [LARGE SCALE GENOMIC DNA]</scope>
    <source>
        <strain>55989 / EAEC</strain>
    </source>
</reference>
<accession>B7LAX0</accession>
<organism>
    <name type="scientific">Escherichia coli (strain 55989 / EAEC)</name>
    <dbReference type="NCBI Taxonomy" id="585055"/>
    <lineage>
        <taxon>Bacteria</taxon>
        <taxon>Pseudomonadati</taxon>
        <taxon>Pseudomonadota</taxon>
        <taxon>Gammaproteobacteria</taxon>
        <taxon>Enterobacterales</taxon>
        <taxon>Enterobacteriaceae</taxon>
        <taxon>Escherichia</taxon>
    </lineage>
</organism>
<gene>
    <name evidence="1" type="primary">pgi</name>
    <name type="ordered locus">EC55989_4513</name>
</gene>
<sequence length="549" mass="61530">MKNINPTQTAAWQALQKHFDEMKDVTIADLFAKDGDRFSKFSATFDDQMLVDYSKNRITEETLAKLQDLAKECDLAGAIKSMFSGEKINRTENRAVLHVALRNRSNTPILVDGKDVMPEVNAVLEKMKTFSEAIISGEWKGYTGKAITDVVNIGIGGSDLGPYMVTEALRPYKNHLNMHFVSNVDGTHIAEVLKKVNPETTLFLVASKTFTTQETMTNAHSARDWFLKAAGDEKHVAKHFAALSTNAKAVGEFGIDTANMFEFWDWVGGRYSLWSAIGLSIVLSIGFDNFVELLSGAHAMDKHFSTTPAEKNLPVLLALIGIWYNNFFGAETEAILPYDQYMHRFAAYFQQGNMESNGKYVDRNGNVVDYQTGPIIWGEPGTNGQHAFYQLIHQGTKMVPCDFIAPAITHNPLSDHHQKLLSNFFAQTEALAFGKSREVVEQEYRDQGKDPATLDYVVPFKVFEGNRPTNSILLREITPFSLGALIALYEHKIFTQGVILNIFTFDQWGVELGKQLANRILPELKDDKEISSHDSSTNGLINRYKAWRG</sequence>
<feature type="chain" id="PRO_1000135528" description="Glucose-6-phosphate isomerase">
    <location>
        <begin position="1"/>
        <end position="549"/>
    </location>
</feature>
<feature type="active site" description="Proton donor" evidence="1">
    <location>
        <position position="355"/>
    </location>
</feature>
<feature type="active site" evidence="1">
    <location>
        <position position="386"/>
    </location>
</feature>
<feature type="active site" evidence="1">
    <location>
        <position position="514"/>
    </location>
</feature>
<feature type="modified residue" description="N6-acetyllysine" evidence="1">
    <location>
        <position position="80"/>
    </location>
</feature>
<feature type="modified residue" description="N6-acetyllysine" evidence="1">
    <location>
        <position position="228"/>
    </location>
</feature>
<feature type="modified residue" description="N6-acetyllysine" evidence="1">
    <location>
        <position position="234"/>
    </location>
</feature>
<dbReference type="EC" id="5.3.1.9" evidence="1"/>
<dbReference type="EMBL" id="CU928145">
    <property type="protein sequence ID" value="CAV01292.1"/>
    <property type="molecule type" value="Genomic_DNA"/>
</dbReference>
<dbReference type="RefSeq" id="WP_000789986.1">
    <property type="nucleotide sequence ID" value="NC_011748.1"/>
</dbReference>
<dbReference type="SMR" id="B7LAX0"/>
<dbReference type="GeneID" id="93777863"/>
<dbReference type="KEGG" id="eck:EC55989_4513"/>
<dbReference type="HOGENOM" id="CLU_017947_3_1_6"/>
<dbReference type="UniPathway" id="UPA00109">
    <property type="reaction ID" value="UER00181"/>
</dbReference>
<dbReference type="UniPathway" id="UPA00138"/>
<dbReference type="Proteomes" id="UP000000746">
    <property type="component" value="Chromosome"/>
</dbReference>
<dbReference type="GO" id="GO:0005829">
    <property type="term" value="C:cytosol"/>
    <property type="evidence" value="ECO:0007669"/>
    <property type="project" value="TreeGrafter"/>
</dbReference>
<dbReference type="GO" id="GO:0097367">
    <property type="term" value="F:carbohydrate derivative binding"/>
    <property type="evidence" value="ECO:0007669"/>
    <property type="project" value="InterPro"/>
</dbReference>
<dbReference type="GO" id="GO:0004347">
    <property type="term" value="F:glucose-6-phosphate isomerase activity"/>
    <property type="evidence" value="ECO:0007669"/>
    <property type="project" value="UniProtKB-UniRule"/>
</dbReference>
<dbReference type="GO" id="GO:0048029">
    <property type="term" value="F:monosaccharide binding"/>
    <property type="evidence" value="ECO:0007669"/>
    <property type="project" value="TreeGrafter"/>
</dbReference>
<dbReference type="GO" id="GO:0006094">
    <property type="term" value="P:gluconeogenesis"/>
    <property type="evidence" value="ECO:0007669"/>
    <property type="project" value="UniProtKB-UniRule"/>
</dbReference>
<dbReference type="GO" id="GO:0051156">
    <property type="term" value="P:glucose 6-phosphate metabolic process"/>
    <property type="evidence" value="ECO:0007669"/>
    <property type="project" value="TreeGrafter"/>
</dbReference>
<dbReference type="GO" id="GO:0006096">
    <property type="term" value="P:glycolytic process"/>
    <property type="evidence" value="ECO:0007669"/>
    <property type="project" value="UniProtKB-UniRule"/>
</dbReference>
<dbReference type="CDD" id="cd05015">
    <property type="entry name" value="SIS_PGI_1"/>
    <property type="match status" value="1"/>
</dbReference>
<dbReference type="CDD" id="cd05016">
    <property type="entry name" value="SIS_PGI_2"/>
    <property type="match status" value="1"/>
</dbReference>
<dbReference type="FunFam" id="1.10.1390.10:FF:000001">
    <property type="entry name" value="Glucose-6-phosphate isomerase"/>
    <property type="match status" value="1"/>
</dbReference>
<dbReference type="FunFam" id="3.40.50.10490:FF:000004">
    <property type="entry name" value="Glucose-6-phosphate isomerase"/>
    <property type="match status" value="1"/>
</dbReference>
<dbReference type="Gene3D" id="1.10.1390.10">
    <property type="match status" value="1"/>
</dbReference>
<dbReference type="Gene3D" id="3.40.50.10490">
    <property type="entry name" value="Glucose-6-phosphate isomerase like protein, domain 1"/>
    <property type="match status" value="2"/>
</dbReference>
<dbReference type="HAMAP" id="MF_00473">
    <property type="entry name" value="G6P_isomerase"/>
    <property type="match status" value="1"/>
</dbReference>
<dbReference type="InterPro" id="IPR001672">
    <property type="entry name" value="G6P_Isomerase"/>
</dbReference>
<dbReference type="InterPro" id="IPR023096">
    <property type="entry name" value="G6P_Isomerase_C"/>
</dbReference>
<dbReference type="InterPro" id="IPR018189">
    <property type="entry name" value="Phosphoglucose_isomerase_CS"/>
</dbReference>
<dbReference type="InterPro" id="IPR046348">
    <property type="entry name" value="SIS_dom_sf"/>
</dbReference>
<dbReference type="InterPro" id="IPR035476">
    <property type="entry name" value="SIS_PGI_1"/>
</dbReference>
<dbReference type="InterPro" id="IPR035482">
    <property type="entry name" value="SIS_PGI_2"/>
</dbReference>
<dbReference type="NCBIfam" id="NF001211">
    <property type="entry name" value="PRK00179.1"/>
    <property type="match status" value="1"/>
</dbReference>
<dbReference type="PANTHER" id="PTHR11469">
    <property type="entry name" value="GLUCOSE-6-PHOSPHATE ISOMERASE"/>
    <property type="match status" value="1"/>
</dbReference>
<dbReference type="PANTHER" id="PTHR11469:SF1">
    <property type="entry name" value="GLUCOSE-6-PHOSPHATE ISOMERASE"/>
    <property type="match status" value="1"/>
</dbReference>
<dbReference type="Pfam" id="PF00342">
    <property type="entry name" value="PGI"/>
    <property type="match status" value="1"/>
</dbReference>
<dbReference type="PRINTS" id="PR00662">
    <property type="entry name" value="G6PISOMERASE"/>
</dbReference>
<dbReference type="SUPFAM" id="SSF53697">
    <property type="entry name" value="SIS domain"/>
    <property type="match status" value="1"/>
</dbReference>
<dbReference type="PROSITE" id="PS00765">
    <property type="entry name" value="P_GLUCOSE_ISOMERASE_1"/>
    <property type="match status" value="1"/>
</dbReference>
<dbReference type="PROSITE" id="PS00174">
    <property type="entry name" value="P_GLUCOSE_ISOMERASE_2"/>
    <property type="match status" value="1"/>
</dbReference>
<dbReference type="PROSITE" id="PS51463">
    <property type="entry name" value="P_GLUCOSE_ISOMERASE_3"/>
    <property type="match status" value="1"/>
</dbReference>
<proteinExistence type="inferred from homology"/>
<keyword id="KW-0007">Acetylation</keyword>
<keyword id="KW-0963">Cytoplasm</keyword>
<keyword id="KW-0312">Gluconeogenesis</keyword>
<keyword id="KW-0324">Glycolysis</keyword>
<keyword id="KW-0413">Isomerase</keyword>
<keyword id="KW-1185">Reference proteome</keyword>
<name>G6PI_ECO55</name>